<name>CP1A1_CHEAU</name>
<sequence length="521" mass="59064">MALMILPFIGALSVSESLVALVTVCLVYLIIKSFQANIPEGLSRLPGPKPLPIIGNVLEVGSRPYLSLTEMSKRYGNVFQIQIGMRPVVVLSGNETVRQALIKQGDEFAGRPDLYSFRFISEGKSLAFSTDQAGVWRARRKLAYSALRSFSTLEGTTPEYSCVLEEHISKEAEYLIKQLDTVMKADGSFDPFRYIVVSVANVICGMCFGRRYDHHDRELLSLVNLSDEFGQVVGSGNPADFIPILQYLPNKTMKKFVNINDRFISFVQKIVSEHYATFNKDNIRDITDSLIDHCEDRKLDENANVQMSDEKVVGIVNDLFGAGLDTISTALSWSVMYLVAYPEIQERLYQELKENVGLDRTPVLSDRNNLPLLEAFILEIFRHSSFLPFTIPHCTTKDTSLNGYYIPKDTCVFINQWQINHDPELWKEPSSFNPDRFLSADGTEVNKVDGEKVMVFGLGKRRCIGEVIARNEVYMFLAILIQKLHFYNLPGEPLDMTPEYGLTMKHKRCHLRATVRVRSDH</sequence>
<comment type="function">
    <text>Cytochromes P450 are a group of heme-thiolate monooxygenases. They oxidize a variety of structurally unrelated compounds, including steroids, fatty acids, and xenobiotics.</text>
</comment>
<comment type="catalytic activity">
    <reaction>
        <text>an organic molecule + reduced [NADPH--hemoprotein reductase] + O2 = an alcohol + oxidized [NADPH--hemoprotein reductase] + H2O + H(+)</text>
        <dbReference type="Rhea" id="RHEA:17149"/>
        <dbReference type="Rhea" id="RHEA-COMP:11964"/>
        <dbReference type="Rhea" id="RHEA-COMP:11965"/>
        <dbReference type="ChEBI" id="CHEBI:15377"/>
        <dbReference type="ChEBI" id="CHEBI:15378"/>
        <dbReference type="ChEBI" id="CHEBI:15379"/>
        <dbReference type="ChEBI" id="CHEBI:30879"/>
        <dbReference type="ChEBI" id="CHEBI:57618"/>
        <dbReference type="ChEBI" id="CHEBI:58210"/>
        <dbReference type="ChEBI" id="CHEBI:142491"/>
        <dbReference type="EC" id="1.14.14.1"/>
    </reaction>
</comment>
<comment type="cofactor">
    <cofactor evidence="1">
        <name>heme</name>
        <dbReference type="ChEBI" id="CHEBI:30413"/>
    </cofactor>
</comment>
<comment type="subcellular location">
    <subcellularLocation>
        <location>Endoplasmic reticulum membrane</location>
        <topology>Peripheral membrane protein</topology>
    </subcellularLocation>
    <subcellularLocation>
        <location>Microsome membrane</location>
        <topology>Peripheral membrane protein</topology>
    </subcellularLocation>
</comment>
<comment type="similarity">
    <text evidence="2">Belongs to the cytochrome P450 family.</text>
</comment>
<feature type="chain" id="PRO_0000051638" description="Cytochrome P450 1A1">
    <location>
        <begin position="1"/>
        <end position="521"/>
    </location>
</feature>
<feature type="binding site" evidence="1">
    <location>
        <position position="229"/>
    </location>
    <ligand>
        <name>substrate</name>
    </ligand>
</feature>
<feature type="binding site" description="axial binding residue" evidence="1">
    <location>
        <position position="463"/>
    </location>
    <ligand>
        <name>heme</name>
        <dbReference type="ChEBI" id="CHEBI:30413"/>
    </ligand>
    <ligandPart>
        <name>Fe</name>
        <dbReference type="ChEBI" id="CHEBI:18248"/>
    </ligandPart>
</feature>
<evidence type="ECO:0000250" key="1"/>
<evidence type="ECO:0000305" key="2"/>
<accession>O42231</accession>
<keyword id="KW-0256">Endoplasmic reticulum</keyword>
<keyword id="KW-0349">Heme</keyword>
<keyword id="KW-0408">Iron</keyword>
<keyword id="KW-0472">Membrane</keyword>
<keyword id="KW-0479">Metal-binding</keyword>
<keyword id="KW-0492">Microsome</keyword>
<keyword id="KW-0503">Monooxygenase</keyword>
<keyword id="KW-0560">Oxidoreductase</keyword>
<proteinExistence type="evidence at transcript level"/>
<protein>
    <recommendedName>
        <fullName>Cytochrome P450 1A1</fullName>
        <ecNumber>1.14.14.1</ecNumber>
    </recommendedName>
    <alternativeName>
        <fullName>CYPIA1</fullName>
    </alternativeName>
</protein>
<gene>
    <name type="primary">cyp1a1</name>
</gene>
<organism>
    <name type="scientific">Chelon auratus</name>
    <name type="common">Golden grey mullet</name>
    <name type="synonym">Liza aurata</name>
    <dbReference type="NCBI Taxonomy" id="48191"/>
    <lineage>
        <taxon>Eukaryota</taxon>
        <taxon>Metazoa</taxon>
        <taxon>Chordata</taxon>
        <taxon>Craniata</taxon>
        <taxon>Vertebrata</taxon>
        <taxon>Euteleostomi</taxon>
        <taxon>Actinopterygii</taxon>
        <taxon>Neopterygii</taxon>
        <taxon>Teleostei</taxon>
        <taxon>Neoteleostei</taxon>
        <taxon>Acanthomorphata</taxon>
        <taxon>Ovalentaria</taxon>
        <taxon>Mugilomorphae</taxon>
        <taxon>Mugilidae</taxon>
        <taxon>Chelon</taxon>
    </lineage>
</organism>
<dbReference type="EC" id="1.14.14.1"/>
<dbReference type="EMBL" id="AF022433">
    <property type="protein sequence ID" value="AAB70307.1"/>
    <property type="molecule type" value="mRNA"/>
</dbReference>
<dbReference type="SMR" id="O42231"/>
<dbReference type="GO" id="GO:0005789">
    <property type="term" value="C:endoplasmic reticulum membrane"/>
    <property type="evidence" value="ECO:0007669"/>
    <property type="project" value="UniProtKB-SubCell"/>
</dbReference>
<dbReference type="GO" id="GO:0020037">
    <property type="term" value="F:heme binding"/>
    <property type="evidence" value="ECO:0007669"/>
    <property type="project" value="InterPro"/>
</dbReference>
<dbReference type="GO" id="GO:0005506">
    <property type="term" value="F:iron ion binding"/>
    <property type="evidence" value="ECO:0007669"/>
    <property type="project" value="InterPro"/>
</dbReference>
<dbReference type="GO" id="GO:0004508">
    <property type="term" value="F:steroid 17-alpha-monooxygenase activity"/>
    <property type="evidence" value="ECO:0007669"/>
    <property type="project" value="TreeGrafter"/>
</dbReference>
<dbReference type="GO" id="GO:0042446">
    <property type="term" value="P:hormone biosynthetic process"/>
    <property type="evidence" value="ECO:0007669"/>
    <property type="project" value="TreeGrafter"/>
</dbReference>
<dbReference type="GO" id="GO:0042448">
    <property type="term" value="P:progesterone metabolic process"/>
    <property type="evidence" value="ECO:0007669"/>
    <property type="project" value="TreeGrafter"/>
</dbReference>
<dbReference type="CDD" id="cd20676">
    <property type="entry name" value="CYP1A"/>
    <property type="match status" value="1"/>
</dbReference>
<dbReference type="FunFam" id="1.10.630.10:FF:000002">
    <property type="entry name" value="Cytochrome P450 1A1"/>
    <property type="match status" value="1"/>
</dbReference>
<dbReference type="Gene3D" id="1.10.630.10">
    <property type="entry name" value="Cytochrome P450"/>
    <property type="match status" value="1"/>
</dbReference>
<dbReference type="InterPro" id="IPR001128">
    <property type="entry name" value="Cyt_P450"/>
</dbReference>
<dbReference type="InterPro" id="IPR017972">
    <property type="entry name" value="Cyt_P450_CS"/>
</dbReference>
<dbReference type="InterPro" id="IPR002401">
    <property type="entry name" value="Cyt_P450_E_grp-I"/>
</dbReference>
<dbReference type="InterPro" id="IPR008066">
    <property type="entry name" value="Cyt_P450_E_grp-I_CYP1"/>
</dbReference>
<dbReference type="InterPro" id="IPR036396">
    <property type="entry name" value="Cyt_P450_sf"/>
</dbReference>
<dbReference type="PANTHER" id="PTHR24289:SF21">
    <property type="entry name" value="CYTOCHROME P450 1A"/>
    <property type="match status" value="1"/>
</dbReference>
<dbReference type="PANTHER" id="PTHR24289">
    <property type="entry name" value="STEROID 17-ALPHA-HYDROXYLASE/17,20 LYASE"/>
    <property type="match status" value="1"/>
</dbReference>
<dbReference type="Pfam" id="PF00067">
    <property type="entry name" value="p450"/>
    <property type="match status" value="1"/>
</dbReference>
<dbReference type="PRINTS" id="PR00463">
    <property type="entry name" value="EP450I"/>
</dbReference>
<dbReference type="PRINTS" id="PR01683">
    <property type="entry name" value="EP450ICYP1A"/>
</dbReference>
<dbReference type="PRINTS" id="PR00385">
    <property type="entry name" value="P450"/>
</dbReference>
<dbReference type="SUPFAM" id="SSF48264">
    <property type="entry name" value="Cytochrome P450"/>
    <property type="match status" value="1"/>
</dbReference>
<dbReference type="PROSITE" id="PS00086">
    <property type="entry name" value="CYTOCHROME_P450"/>
    <property type="match status" value="1"/>
</dbReference>
<reference key="1">
    <citation type="submission" date="1997-09" db="EMBL/GenBank/DDBJ databases">
        <authorList>
            <person name="Cousinou M."/>
            <person name="Lopez-Barea J."/>
            <person name="Dorado G."/>
        </authorList>
    </citation>
    <scope>NUCLEOTIDE SEQUENCE [MRNA]</scope>
    <source>
        <tissue>Liver</tissue>
    </source>
</reference>